<comment type="function">
    <text evidence="1">Catalyzes the ATP-dependent condensation of GlcN-Ins and L-cysteine to form L-Cys-GlcN-Ins.</text>
</comment>
<comment type="catalytic activity">
    <reaction evidence="1">
        <text>1D-myo-inositol 2-amino-2-deoxy-alpha-D-glucopyranoside + L-cysteine + ATP = 1D-myo-inositol 2-(L-cysteinylamino)-2-deoxy-alpha-D-glucopyranoside + AMP + diphosphate + H(+)</text>
        <dbReference type="Rhea" id="RHEA:26176"/>
        <dbReference type="ChEBI" id="CHEBI:15378"/>
        <dbReference type="ChEBI" id="CHEBI:30616"/>
        <dbReference type="ChEBI" id="CHEBI:33019"/>
        <dbReference type="ChEBI" id="CHEBI:35235"/>
        <dbReference type="ChEBI" id="CHEBI:58886"/>
        <dbReference type="ChEBI" id="CHEBI:58887"/>
        <dbReference type="ChEBI" id="CHEBI:456215"/>
        <dbReference type="EC" id="6.3.1.13"/>
    </reaction>
</comment>
<comment type="cofactor">
    <cofactor evidence="1">
        <name>Zn(2+)</name>
        <dbReference type="ChEBI" id="CHEBI:29105"/>
    </cofactor>
    <text evidence="1">Binds 1 zinc ion per subunit.</text>
</comment>
<comment type="subunit">
    <text evidence="1">Monomer.</text>
</comment>
<comment type="similarity">
    <text evidence="1">Belongs to the class-I aminoacyl-tRNA synthetase family. MshC subfamily.</text>
</comment>
<feature type="chain" id="PRO_0000400475" description="L-cysteine:1D-myo-inositol 2-amino-2-deoxy-alpha-D-glucopyranoside ligase">
    <location>
        <begin position="1"/>
        <end position="413"/>
    </location>
</feature>
<feature type="region of interest" description="Disordered" evidence="2">
    <location>
        <begin position="1"/>
        <end position="21"/>
    </location>
</feature>
<feature type="short sequence motif" description="'HIGH' region" evidence="1">
    <location>
        <begin position="45"/>
        <end position="55"/>
    </location>
</feature>
<feature type="short sequence motif" description="'ERGGDP' region" evidence="1">
    <location>
        <begin position="187"/>
        <end position="192"/>
    </location>
</feature>
<feature type="short sequence motif" description="'KMSKS' region" evidence="1">
    <location>
        <begin position="289"/>
        <end position="293"/>
    </location>
</feature>
<feature type="binding site" evidence="1">
    <location>
        <begin position="43"/>
        <end position="46"/>
    </location>
    <ligand>
        <name>L-cysteinyl-5'-AMP</name>
        <dbReference type="ChEBI" id="CHEBI:144924"/>
    </ligand>
</feature>
<feature type="binding site" evidence="1">
    <location>
        <position position="43"/>
    </location>
    <ligand>
        <name>Zn(2+)</name>
        <dbReference type="ChEBI" id="CHEBI:29105"/>
    </ligand>
</feature>
<feature type="binding site" evidence="1">
    <location>
        <position position="58"/>
    </location>
    <ligand>
        <name>L-cysteinyl-5'-AMP</name>
        <dbReference type="ChEBI" id="CHEBI:144924"/>
    </ligand>
</feature>
<feature type="binding site" evidence="1">
    <location>
        <begin position="81"/>
        <end position="83"/>
    </location>
    <ligand>
        <name>L-cysteinyl-5'-AMP</name>
        <dbReference type="ChEBI" id="CHEBI:144924"/>
    </ligand>
</feature>
<feature type="binding site" evidence="1">
    <location>
        <position position="227"/>
    </location>
    <ligand>
        <name>L-cysteinyl-5'-AMP</name>
        <dbReference type="ChEBI" id="CHEBI:144924"/>
    </ligand>
</feature>
<feature type="binding site" evidence="1">
    <location>
        <position position="231"/>
    </location>
    <ligand>
        <name>Zn(2+)</name>
        <dbReference type="ChEBI" id="CHEBI:29105"/>
    </ligand>
</feature>
<feature type="binding site" evidence="1">
    <location>
        <begin position="249"/>
        <end position="251"/>
    </location>
    <ligand>
        <name>L-cysteinyl-5'-AMP</name>
        <dbReference type="ChEBI" id="CHEBI:144924"/>
    </ligand>
</feature>
<feature type="binding site" evidence="1">
    <location>
        <position position="256"/>
    </location>
    <ligand>
        <name>Zn(2+)</name>
        <dbReference type="ChEBI" id="CHEBI:29105"/>
    </ligand>
</feature>
<feature type="binding site" evidence="1">
    <location>
        <position position="283"/>
    </location>
    <ligand>
        <name>L-cysteinyl-5'-AMP</name>
        <dbReference type="ChEBI" id="CHEBI:144924"/>
    </ligand>
</feature>
<accession>C0ZZW9</accession>
<keyword id="KW-0067">ATP-binding</keyword>
<keyword id="KW-0436">Ligase</keyword>
<keyword id="KW-0479">Metal-binding</keyword>
<keyword id="KW-0547">Nucleotide-binding</keyword>
<keyword id="KW-0862">Zinc</keyword>
<evidence type="ECO:0000255" key="1">
    <source>
        <dbReference type="HAMAP-Rule" id="MF_01697"/>
    </source>
</evidence>
<evidence type="ECO:0000256" key="2">
    <source>
        <dbReference type="SAM" id="MobiDB-lite"/>
    </source>
</evidence>
<organism>
    <name type="scientific">Rhodococcus erythropolis (strain PR4 / NBRC 100887)</name>
    <dbReference type="NCBI Taxonomy" id="234621"/>
    <lineage>
        <taxon>Bacteria</taxon>
        <taxon>Bacillati</taxon>
        <taxon>Actinomycetota</taxon>
        <taxon>Actinomycetes</taxon>
        <taxon>Mycobacteriales</taxon>
        <taxon>Nocardiaceae</taxon>
        <taxon>Rhodococcus</taxon>
        <taxon>Rhodococcus erythropolis group</taxon>
    </lineage>
</organism>
<reference key="1">
    <citation type="submission" date="2005-03" db="EMBL/GenBank/DDBJ databases">
        <title>Comparison of the complete genome sequences of Rhodococcus erythropolis PR4 and Rhodococcus opacus B4.</title>
        <authorList>
            <person name="Takarada H."/>
            <person name="Sekine M."/>
            <person name="Hosoyama A."/>
            <person name="Yamada R."/>
            <person name="Fujisawa T."/>
            <person name="Omata S."/>
            <person name="Shimizu A."/>
            <person name="Tsukatani N."/>
            <person name="Tanikawa S."/>
            <person name="Fujita N."/>
            <person name="Harayama S."/>
        </authorList>
    </citation>
    <scope>NUCLEOTIDE SEQUENCE [LARGE SCALE GENOMIC DNA]</scope>
    <source>
        <strain>PR4 / NBRC 100887</strain>
    </source>
</reference>
<proteinExistence type="inferred from homology"/>
<gene>
    <name evidence="1" type="primary">mshC</name>
    <name type="ordered locus">RER_31960</name>
</gene>
<dbReference type="EC" id="6.3.1.13" evidence="1"/>
<dbReference type="EMBL" id="AP008957">
    <property type="protein sequence ID" value="BAH33904.1"/>
    <property type="molecule type" value="Genomic_DNA"/>
</dbReference>
<dbReference type="RefSeq" id="WP_020907820.1">
    <property type="nucleotide sequence ID" value="NC_012490.1"/>
</dbReference>
<dbReference type="SMR" id="C0ZZW9"/>
<dbReference type="KEGG" id="rer:RER_31960"/>
<dbReference type="PATRIC" id="fig|234621.6.peg.3702"/>
<dbReference type="eggNOG" id="COG0215">
    <property type="taxonomic scope" value="Bacteria"/>
</dbReference>
<dbReference type="HOGENOM" id="CLU_013528_0_0_11"/>
<dbReference type="Proteomes" id="UP000002204">
    <property type="component" value="Chromosome"/>
</dbReference>
<dbReference type="GO" id="GO:0005829">
    <property type="term" value="C:cytosol"/>
    <property type="evidence" value="ECO:0007669"/>
    <property type="project" value="TreeGrafter"/>
</dbReference>
<dbReference type="GO" id="GO:0005524">
    <property type="term" value="F:ATP binding"/>
    <property type="evidence" value="ECO:0007669"/>
    <property type="project" value="UniProtKB-KW"/>
</dbReference>
<dbReference type="GO" id="GO:0035446">
    <property type="term" value="F:cysteine-glucosaminylinositol ligase activity"/>
    <property type="evidence" value="ECO:0007669"/>
    <property type="project" value="UniProtKB-UniRule"/>
</dbReference>
<dbReference type="GO" id="GO:0004817">
    <property type="term" value="F:cysteine-tRNA ligase activity"/>
    <property type="evidence" value="ECO:0007669"/>
    <property type="project" value="TreeGrafter"/>
</dbReference>
<dbReference type="GO" id="GO:0008270">
    <property type="term" value="F:zinc ion binding"/>
    <property type="evidence" value="ECO:0007669"/>
    <property type="project" value="UniProtKB-UniRule"/>
</dbReference>
<dbReference type="GO" id="GO:0006423">
    <property type="term" value="P:cysteinyl-tRNA aminoacylation"/>
    <property type="evidence" value="ECO:0007669"/>
    <property type="project" value="TreeGrafter"/>
</dbReference>
<dbReference type="GO" id="GO:0010125">
    <property type="term" value="P:mycothiol biosynthetic process"/>
    <property type="evidence" value="ECO:0007669"/>
    <property type="project" value="UniProtKB-UniRule"/>
</dbReference>
<dbReference type="CDD" id="cd07955">
    <property type="entry name" value="Anticodon_Ia_Cys_like"/>
    <property type="match status" value="1"/>
</dbReference>
<dbReference type="CDD" id="cd00672">
    <property type="entry name" value="CysRS_core"/>
    <property type="match status" value="1"/>
</dbReference>
<dbReference type="FunFam" id="3.40.50.620:FF:000134">
    <property type="entry name" value="L-cysteine:1D-myo-inositol 2-amino-2-deoxy-alpha-D-glucopyranoside ligase"/>
    <property type="match status" value="1"/>
</dbReference>
<dbReference type="Gene3D" id="1.20.120.640">
    <property type="entry name" value="Anticodon-binding domain of a subclass of class I aminoacyl-tRNA synthetases"/>
    <property type="match status" value="1"/>
</dbReference>
<dbReference type="Gene3D" id="3.40.50.620">
    <property type="entry name" value="HUPs"/>
    <property type="match status" value="1"/>
</dbReference>
<dbReference type="HAMAP" id="MF_01697">
    <property type="entry name" value="MshC"/>
    <property type="match status" value="1"/>
</dbReference>
<dbReference type="InterPro" id="IPR024909">
    <property type="entry name" value="Cys-tRNA/MSH_ligase"/>
</dbReference>
<dbReference type="InterPro" id="IPR017812">
    <property type="entry name" value="Mycothiol_ligase_MshC"/>
</dbReference>
<dbReference type="InterPro" id="IPR014729">
    <property type="entry name" value="Rossmann-like_a/b/a_fold"/>
</dbReference>
<dbReference type="InterPro" id="IPR032678">
    <property type="entry name" value="tRNA-synt_1_cat_dom"/>
</dbReference>
<dbReference type="NCBIfam" id="TIGR03447">
    <property type="entry name" value="mycothiol_MshC"/>
    <property type="match status" value="1"/>
</dbReference>
<dbReference type="PANTHER" id="PTHR10890:SF3">
    <property type="entry name" value="CYSTEINE--TRNA LIGASE, CYTOPLASMIC"/>
    <property type="match status" value="1"/>
</dbReference>
<dbReference type="PANTHER" id="PTHR10890">
    <property type="entry name" value="CYSTEINYL-TRNA SYNTHETASE"/>
    <property type="match status" value="1"/>
</dbReference>
<dbReference type="Pfam" id="PF01406">
    <property type="entry name" value="tRNA-synt_1e"/>
    <property type="match status" value="1"/>
</dbReference>
<dbReference type="PRINTS" id="PR00983">
    <property type="entry name" value="TRNASYNTHCYS"/>
</dbReference>
<dbReference type="SUPFAM" id="SSF52374">
    <property type="entry name" value="Nucleotidylyl transferase"/>
    <property type="match status" value="1"/>
</dbReference>
<sequence>MQSWSDTALPSVPGQGPPLRLYDTADRQVRPVTPGKKATMYVCGITPYDATHLGHAATYLTFDLVNRIWRDAGHDVHYVQNVTDVDDPLFERANRDGEDWIVLGIRETALFREDMEALRVLPPKDYIGAVESVNEVVELVEKFVASGAAYIVDDAEFPDVYFRADATEQFGYESGYDRATMEKFFAERGGDPDRVGKRNPLDALVWRAERPGEPSWPSPFGPGRPGWHIECAAIALNRIGSGFDVQGGGSDLIFPHHEFSAAHAESATGDRRFARHYVHTGMIGLDGEKMSKSRGNLVFVSKLRGEGVDPAAIRLGLLSGHYRQDRAWTDQVLEDAQSRLKVWREAAALDSAPSATDTVARLRQHLADDLDTPKALDALDGWARRAIEGGGSDTQAPGEFADAVDALLGISLR</sequence>
<protein>
    <recommendedName>
        <fullName evidence="1">L-cysteine:1D-myo-inositol 2-amino-2-deoxy-alpha-D-glucopyranoside ligase</fullName>
        <shortName evidence="1">L-Cys:GlcN-Ins ligase</shortName>
        <ecNumber evidence="1">6.3.1.13</ecNumber>
    </recommendedName>
    <alternativeName>
        <fullName evidence="1">Mycothiol ligase</fullName>
        <shortName evidence="1">MSH ligase</shortName>
    </alternativeName>
</protein>
<name>MSHC_RHOE4</name>